<sequence length="414" mass="45595">MQSWYCPPVPVLPGRGPQLRLYDSADRQVRPVAPGSKATMYVCGITPYDATHLGHAATYVTFDLIHRLWLDLGHELHYVQNITDIDDPLFERADRDGVDWRDLAQAEVALFCEDMAALRVLPPQDYVGATEAIAEMVELIEKMLACGAAYVIDREMGEYQDIYFRADATLQFGYESGYDRDTMLRLCEERGGDPRRPGKSDELDALLWRAARPGEPSWPSPFGPGRPGWHVECAAIALSRIGSGLDIQGGGSDLIFPHHEFTAAHAECVSGERRFARHYVHAGMIGWDGHKMSKSRGNLVLVSALRAQDVEPSAVRLGLLAGHYRADRFWSQQVLDEATARLHRWRTATALPAGPAAVDVVARVRRYLADDLDTPKAIAALDGWVTDAVEYGGHDAGAPKLVATAIDALLGVDL</sequence>
<reference key="1">
    <citation type="journal article" date="2002" name="J. Bacteriol.">
        <title>Whole-genome comparison of Mycobacterium tuberculosis clinical and laboratory strains.</title>
        <authorList>
            <person name="Fleischmann R.D."/>
            <person name="Alland D."/>
            <person name="Eisen J.A."/>
            <person name="Carpenter L."/>
            <person name="White O."/>
            <person name="Peterson J.D."/>
            <person name="DeBoy R.T."/>
            <person name="Dodson R.J."/>
            <person name="Gwinn M.L."/>
            <person name="Haft D.H."/>
            <person name="Hickey E.K."/>
            <person name="Kolonay J.F."/>
            <person name="Nelson W.C."/>
            <person name="Umayam L.A."/>
            <person name="Ermolaeva M.D."/>
            <person name="Salzberg S.L."/>
            <person name="Delcher A."/>
            <person name="Utterback T.R."/>
            <person name="Weidman J.F."/>
            <person name="Khouri H.M."/>
            <person name="Gill J."/>
            <person name="Mikula A."/>
            <person name="Bishai W."/>
            <person name="Jacobs W.R. Jr."/>
            <person name="Venter J.C."/>
            <person name="Fraser C.M."/>
        </authorList>
    </citation>
    <scope>NUCLEOTIDE SEQUENCE [LARGE SCALE GENOMIC DNA]</scope>
    <source>
        <strain>CDC 1551 / Oshkosh</strain>
    </source>
</reference>
<feature type="chain" id="PRO_0000427802" description="L-cysteine:1D-myo-inositol 2-amino-2-deoxy-alpha-D-glucopyranoside ligase">
    <location>
        <begin position="1"/>
        <end position="414"/>
    </location>
</feature>
<feature type="short sequence motif" description="'HIGH' region">
    <location>
        <begin position="45"/>
        <end position="55"/>
    </location>
</feature>
<feature type="short sequence motif" description="'ERGGDP' region">
    <location>
        <begin position="189"/>
        <end position="194"/>
    </location>
</feature>
<feature type="short sequence motif" description="'KMSKS' region">
    <location>
        <begin position="291"/>
        <end position="295"/>
    </location>
</feature>
<feature type="binding site" evidence="1">
    <location>
        <begin position="43"/>
        <end position="46"/>
    </location>
    <ligand>
        <name>L-cysteinyl-5'-AMP</name>
        <dbReference type="ChEBI" id="CHEBI:144924"/>
    </ligand>
</feature>
<feature type="binding site" evidence="1">
    <location>
        <position position="43"/>
    </location>
    <ligand>
        <name>Zn(2+)</name>
        <dbReference type="ChEBI" id="CHEBI:29105"/>
    </ligand>
</feature>
<feature type="binding site" evidence="1">
    <location>
        <position position="58"/>
    </location>
    <ligand>
        <name>L-cysteinyl-5'-AMP</name>
        <dbReference type="ChEBI" id="CHEBI:144924"/>
    </ligand>
</feature>
<feature type="binding site" evidence="1">
    <location>
        <begin position="81"/>
        <end position="83"/>
    </location>
    <ligand>
        <name>L-cysteinyl-5'-AMP</name>
        <dbReference type="ChEBI" id="CHEBI:144924"/>
    </ligand>
</feature>
<feature type="binding site" evidence="1">
    <location>
        <position position="229"/>
    </location>
    <ligand>
        <name>L-cysteinyl-5'-AMP</name>
        <dbReference type="ChEBI" id="CHEBI:144924"/>
    </ligand>
</feature>
<feature type="binding site" evidence="1">
    <location>
        <position position="233"/>
    </location>
    <ligand>
        <name>Zn(2+)</name>
        <dbReference type="ChEBI" id="CHEBI:29105"/>
    </ligand>
</feature>
<feature type="binding site" evidence="1">
    <location>
        <begin position="251"/>
        <end position="253"/>
    </location>
    <ligand>
        <name>L-cysteinyl-5'-AMP</name>
        <dbReference type="ChEBI" id="CHEBI:144924"/>
    </ligand>
</feature>
<feature type="binding site" evidence="1">
    <location>
        <position position="258"/>
    </location>
    <ligand>
        <name>Zn(2+)</name>
        <dbReference type="ChEBI" id="CHEBI:29105"/>
    </ligand>
</feature>
<feature type="binding site" evidence="1">
    <location>
        <position position="285"/>
    </location>
    <ligand>
        <name>L-cysteinyl-5'-AMP</name>
        <dbReference type="ChEBI" id="CHEBI:144924"/>
    </ligand>
</feature>
<keyword id="KW-0067">ATP-binding</keyword>
<keyword id="KW-0436">Ligase</keyword>
<keyword id="KW-0479">Metal-binding</keyword>
<keyword id="KW-0547">Nucleotide-binding</keyword>
<keyword id="KW-1185">Reference proteome</keyword>
<keyword id="KW-0862">Zinc</keyword>
<gene>
    <name type="primary">mshC</name>
    <name type="synonym">cysS2</name>
    <name type="ordered locus">MT2188</name>
</gene>
<name>MSHC_MYCTO</name>
<proteinExistence type="inferred from homology"/>
<protein>
    <recommendedName>
        <fullName>L-cysteine:1D-myo-inositol 2-amino-2-deoxy-alpha-D-glucopyranoside ligase</fullName>
        <shortName>L-Cys:GlcN-Ins ligase</shortName>
        <ecNumber>6.3.1.13</ecNumber>
    </recommendedName>
    <alternativeName>
        <fullName>Mycothiol ligase</fullName>
        <shortName>MSH ligase</shortName>
    </alternativeName>
</protein>
<comment type="function">
    <text evidence="1">Catalyzes the ATP-dependent condensation of GlcN-Ins and L-cysteine to form L-Cys-GlcN-Ins.</text>
</comment>
<comment type="catalytic activity">
    <reaction>
        <text>1D-myo-inositol 2-amino-2-deoxy-alpha-D-glucopyranoside + L-cysteine + ATP = 1D-myo-inositol 2-(L-cysteinylamino)-2-deoxy-alpha-D-glucopyranoside + AMP + diphosphate + H(+)</text>
        <dbReference type="Rhea" id="RHEA:26176"/>
        <dbReference type="ChEBI" id="CHEBI:15378"/>
        <dbReference type="ChEBI" id="CHEBI:30616"/>
        <dbReference type="ChEBI" id="CHEBI:33019"/>
        <dbReference type="ChEBI" id="CHEBI:35235"/>
        <dbReference type="ChEBI" id="CHEBI:58886"/>
        <dbReference type="ChEBI" id="CHEBI:58887"/>
        <dbReference type="ChEBI" id="CHEBI:456215"/>
        <dbReference type="EC" id="6.3.1.13"/>
    </reaction>
</comment>
<comment type="cofactor">
    <cofactor evidence="1">
        <name>Zn(2+)</name>
        <dbReference type="ChEBI" id="CHEBI:29105"/>
    </cofactor>
    <text evidence="1">Binds 1 zinc ion per subunit.</text>
</comment>
<comment type="subunit">
    <text evidence="1">Monomer.</text>
</comment>
<comment type="similarity">
    <text evidence="2">Belongs to the class-I aminoacyl-tRNA synthetase family. MshC subfamily.</text>
</comment>
<comment type="sequence caution" evidence="2">
    <conflict type="erroneous initiation">
        <sequence resource="EMBL-CDS" id="AAK46472"/>
    </conflict>
    <text>Truncated N-terminus.</text>
</comment>
<dbReference type="EC" id="6.3.1.13"/>
<dbReference type="EMBL" id="AE000516">
    <property type="protein sequence ID" value="AAK46472.1"/>
    <property type="status" value="ALT_INIT"/>
    <property type="molecule type" value="Genomic_DNA"/>
</dbReference>
<dbReference type="PIR" id="E70514">
    <property type="entry name" value="E70514"/>
</dbReference>
<dbReference type="RefSeq" id="WP_003411091.1">
    <property type="nucleotide sequence ID" value="NZ_KK341227.1"/>
</dbReference>
<dbReference type="SMR" id="P9WJM8"/>
<dbReference type="KEGG" id="mtc:MT2188"/>
<dbReference type="PATRIC" id="fig|83331.31.peg.2360"/>
<dbReference type="HOGENOM" id="CLU_013528_0_0_11"/>
<dbReference type="Proteomes" id="UP000001020">
    <property type="component" value="Chromosome"/>
</dbReference>
<dbReference type="GO" id="GO:0005829">
    <property type="term" value="C:cytosol"/>
    <property type="evidence" value="ECO:0007669"/>
    <property type="project" value="TreeGrafter"/>
</dbReference>
<dbReference type="GO" id="GO:0005524">
    <property type="term" value="F:ATP binding"/>
    <property type="evidence" value="ECO:0007669"/>
    <property type="project" value="UniProtKB-KW"/>
</dbReference>
<dbReference type="GO" id="GO:0035446">
    <property type="term" value="F:cysteine-glucosaminylinositol ligase activity"/>
    <property type="evidence" value="ECO:0007669"/>
    <property type="project" value="UniProtKB-UniRule"/>
</dbReference>
<dbReference type="GO" id="GO:0004817">
    <property type="term" value="F:cysteine-tRNA ligase activity"/>
    <property type="evidence" value="ECO:0007669"/>
    <property type="project" value="TreeGrafter"/>
</dbReference>
<dbReference type="GO" id="GO:0008270">
    <property type="term" value="F:zinc ion binding"/>
    <property type="evidence" value="ECO:0007669"/>
    <property type="project" value="UniProtKB-UniRule"/>
</dbReference>
<dbReference type="GO" id="GO:0006423">
    <property type="term" value="P:cysteinyl-tRNA aminoacylation"/>
    <property type="evidence" value="ECO:0007669"/>
    <property type="project" value="TreeGrafter"/>
</dbReference>
<dbReference type="GO" id="GO:0010125">
    <property type="term" value="P:mycothiol biosynthetic process"/>
    <property type="evidence" value="ECO:0007669"/>
    <property type="project" value="UniProtKB-UniRule"/>
</dbReference>
<dbReference type="CDD" id="cd07955">
    <property type="entry name" value="Anticodon_Ia_Cys_like"/>
    <property type="match status" value="1"/>
</dbReference>
<dbReference type="CDD" id="cd00672">
    <property type="entry name" value="CysRS_core"/>
    <property type="match status" value="1"/>
</dbReference>
<dbReference type="FunFam" id="1.20.120.640:FF:000001">
    <property type="entry name" value="L-cysteine:1D-myo-inositol 2-amino-2-deoxy-alpha-D-glucopyranoside ligase"/>
    <property type="match status" value="1"/>
</dbReference>
<dbReference type="FunFam" id="3.40.50.620:FF:000134">
    <property type="entry name" value="L-cysteine:1D-myo-inositol 2-amino-2-deoxy-alpha-D-glucopyranoside ligase"/>
    <property type="match status" value="1"/>
</dbReference>
<dbReference type="Gene3D" id="1.20.120.640">
    <property type="entry name" value="Anticodon-binding domain of a subclass of class I aminoacyl-tRNA synthetases"/>
    <property type="match status" value="1"/>
</dbReference>
<dbReference type="Gene3D" id="3.40.50.620">
    <property type="entry name" value="HUPs"/>
    <property type="match status" value="1"/>
</dbReference>
<dbReference type="HAMAP" id="MF_01697">
    <property type="entry name" value="MshC"/>
    <property type="match status" value="1"/>
</dbReference>
<dbReference type="InterPro" id="IPR024909">
    <property type="entry name" value="Cys-tRNA/MSH_ligase"/>
</dbReference>
<dbReference type="InterPro" id="IPR017812">
    <property type="entry name" value="Mycothiol_ligase_MshC"/>
</dbReference>
<dbReference type="InterPro" id="IPR014729">
    <property type="entry name" value="Rossmann-like_a/b/a_fold"/>
</dbReference>
<dbReference type="InterPro" id="IPR032678">
    <property type="entry name" value="tRNA-synt_1_cat_dom"/>
</dbReference>
<dbReference type="NCBIfam" id="TIGR03447">
    <property type="entry name" value="mycothiol_MshC"/>
    <property type="match status" value="1"/>
</dbReference>
<dbReference type="PANTHER" id="PTHR10890:SF3">
    <property type="entry name" value="CYSTEINE--TRNA LIGASE, CYTOPLASMIC"/>
    <property type="match status" value="1"/>
</dbReference>
<dbReference type="PANTHER" id="PTHR10890">
    <property type="entry name" value="CYSTEINYL-TRNA SYNTHETASE"/>
    <property type="match status" value="1"/>
</dbReference>
<dbReference type="Pfam" id="PF01406">
    <property type="entry name" value="tRNA-synt_1e"/>
    <property type="match status" value="1"/>
</dbReference>
<dbReference type="PRINTS" id="PR00983">
    <property type="entry name" value="TRNASYNTHCYS"/>
</dbReference>
<dbReference type="SUPFAM" id="SSF52374">
    <property type="entry name" value="Nucleotidylyl transferase"/>
    <property type="match status" value="1"/>
</dbReference>
<accession>P9WJM8</accession>
<accession>L0T8X7</accession>
<accession>O33264</accession>
<accession>P67017</accession>
<organism>
    <name type="scientific">Mycobacterium tuberculosis (strain CDC 1551 / Oshkosh)</name>
    <dbReference type="NCBI Taxonomy" id="83331"/>
    <lineage>
        <taxon>Bacteria</taxon>
        <taxon>Bacillati</taxon>
        <taxon>Actinomycetota</taxon>
        <taxon>Actinomycetes</taxon>
        <taxon>Mycobacteriales</taxon>
        <taxon>Mycobacteriaceae</taxon>
        <taxon>Mycobacterium</taxon>
        <taxon>Mycobacterium tuberculosis complex</taxon>
    </lineage>
</organism>
<evidence type="ECO:0000250" key="1"/>
<evidence type="ECO:0000305" key="2"/>